<sequence length="342" mass="37449">MTTLTITRPDDWHVHLRDGEVLADTVRDISRYNGRALIMPNTVPPVTTSEMALAYRDRIQAHNQTEQFSPLMSLYLTDNTTADEVRKAKASGAVVAAKLYPAGATTNSDSGVTDVKKIYPVLQAMQEVGMLLLVHGEVTTHDVDIFDREKTFLDNVLAPIVQDFPDLKIVLEHITTSDAVVFVKNANENVAATITAHHLLYNRNHMLVGGIKPHFYCLPILKRNTHQLALISAATSGNKKFFLGTDSAPHAKGAKESACGCAGSYTAHAAVELYAEVFEQAGKLENLEAFASHNGPDFYGLPRNQDTITLVKDAWPVPASMPFGGDIVVPIRAGENMEWKVK</sequence>
<dbReference type="EC" id="3.5.2.3" evidence="1"/>
<dbReference type="EMBL" id="AE016796">
    <property type="protein sequence ID" value="AAO08457.1"/>
    <property type="status" value="ALT_INIT"/>
    <property type="molecule type" value="Genomic_DNA"/>
</dbReference>
<dbReference type="RefSeq" id="WP_043921226.1">
    <property type="nucleotide sequence ID" value="NC_004460.2"/>
</dbReference>
<dbReference type="SMR" id="Q8D3T9"/>
<dbReference type="KEGG" id="vvu:VV2_1596"/>
<dbReference type="HOGENOM" id="CLU_041558_1_0_6"/>
<dbReference type="UniPathway" id="UPA00070">
    <property type="reaction ID" value="UER00117"/>
</dbReference>
<dbReference type="Proteomes" id="UP000002275">
    <property type="component" value="Chromosome 2"/>
</dbReference>
<dbReference type="GO" id="GO:0005829">
    <property type="term" value="C:cytosol"/>
    <property type="evidence" value="ECO:0007669"/>
    <property type="project" value="TreeGrafter"/>
</dbReference>
<dbReference type="GO" id="GO:0004151">
    <property type="term" value="F:dihydroorotase activity"/>
    <property type="evidence" value="ECO:0007669"/>
    <property type="project" value="UniProtKB-UniRule"/>
</dbReference>
<dbReference type="GO" id="GO:0008270">
    <property type="term" value="F:zinc ion binding"/>
    <property type="evidence" value="ECO:0007669"/>
    <property type="project" value="UniProtKB-UniRule"/>
</dbReference>
<dbReference type="GO" id="GO:0006207">
    <property type="term" value="P:'de novo' pyrimidine nucleobase biosynthetic process"/>
    <property type="evidence" value="ECO:0007669"/>
    <property type="project" value="TreeGrafter"/>
</dbReference>
<dbReference type="GO" id="GO:0044205">
    <property type="term" value="P:'de novo' UMP biosynthetic process"/>
    <property type="evidence" value="ECO:0007669"/>
    <property type="project" value="UniProtKB-UniRule"/>
</dbReference>
<dbReference type="CDD" id="cd01294">
    <property type="entry name" value="DHOase"/>
    <property type="match status" value="1"/>
</dbReference>
<dbReference type="FunFam" id="3.20.20.140:FF:000006">
    <property type="entry name" value="Dihydroorotase"/>
    <property type="match status" value="1"/>
</dbReference>
<dbReference type="Gene3D" id="3.20.20.140">
    <property type="entry name" value="Metal-dependent hydrolases"/>
    <property type="match status" value="1"/>
</dbReference>
<dbReference type="HAMAP" id="MF_00219">
    <property type="entry name" value="PyrC_classII"/>
    <property type="match status" value="1"/>
</dbReference>
<dbReference type="InterPro" id="IPR006680">
    <property type="entry name" value="Amidohydro-rel"/>
</dbReference>
<dbReference type="InterPro" id="IPR004721">
    <property type="entry name" value="DHOdimr"/>
</dbReference>
<dbReference type="InterPro" id="IPR002195">
    <property type="entry name" value="Dihydroorotase_CS"/>
</dbReference>
<dbReference type="InterPro" id="IPR032466">
    <property type="entry name" value="Metal_Hydrolase"/>
</dbReference>
<dbReference type="NCBIfam" id="TIGR00856">
    <property type="entry name" value="pyrC_dimer"/>
    <property type="match status" value="1"/>
</dbReference>
<dbReference type="PANTHER" id="PTHR43137">
    <property type="entry name" value="DIHYDROOROTASE"/>
    <property type="match status" value="1"/>
</dbReference>
<dbReference type="PANTHER" id="PTHR43137:SF1">
    <property type="entry name" value="DIHYDROOROTASE"/>
    <property type="match status" value="1"/>
</dbReference>
<dbReference type="Pfam" id="PF01979">
    <property type="entry name" value="Amidohydro_1"/>
    <property type="match status" value="1"/>
</dbReference>
<dbReference type="PIRSF" id="PIRSF001237">
    <property type="entry name" value="DHOdimr"/>
    <property type="match status" value="1"/>
</dbReference>
<dbReference type="SUPFAM" id="SSF51556">
    <property type="entry name" value="Metallo-dependent hydrolases"/>
    <property type="match status" value="1"/>
</dbReference>
<dbReference type="PROSITE" id="PS00482">
    <property type="entry name" value="DIHYDROOROTASE_1"/>
    <property type="match status" value="1"/>
</dbReference>
<dbReference type="PROSITE" id="PS00483">
    <property type="entry name" value="DIHYDROOROTASE_2"/>
    <property type="match status" value="1"/>
</dbReference>
<keyword id="KW-0378">Hydrolase</keyword>
<keyword id="KW-0479">Metal-binding</keyword>
<keyword id="KW-0665">Pyrimidine biosynthesis</keyword>
<keyword id="KW-0862">Zinc</keyword>
<name>PYRC_VIBVU</name>
<organism>
    <name type="scientific">Vibrio vulnificus (strain CMCP6)</name>
    <dbReference type="NCBI Taxonomy" id="216895"/>
    <lineage>
        <taxon>Bacteria</taxon>
        <taxon>Pseudomonadati</taxon>
        <taxon>Pseudomonadota</taxon>
        <taxon>Gammaproteobacteria</taxon>
        <taxon>Vibrionales</taxon>
        <taxon>Vibrionaceae</taxon>
        <taxon>Vibrio</taxon>
    </lineage>
</organism>
<gene>
    <name evidence="1" type="primary">pyrC</name>
    <name type="ordered locus">VV2_1596</name>
</gene>
<accession>Q8D3T9</accession>
<protein>
    <recommendedName>
        <fullName evidence="1">Dihydroorotase</fullName>
        <shortName evidence="1">DHOase</shortName>
        <ecNumber evidence="1">3.5.2.3</ecNumber>
    </recommendedName>
</protein>
<comment type="function">
    <text evidence="1">Catalyzes the reversible cyclization of carbamoyl aspartate to dihydroorotate.</text>
</comment>
<comment type="catalytic activity">
    <reaction evidence="1">
        <text>(S)-dihydroorotate + H2O = N-carbamoyl-L-aspartate + H(+)</text>
        <dbReference type="Rhea" id="RHEA:24296"/>
        <dbReference type="ChEBI" id="CHEBI:15377"/>
        <dbReference type="ChEBI" id="CHEBI:15378"/>
        <dbReference type="ChEBI" id="CHEBI:30864"/>
        <dbReference type="ChEBI" id="CHEBI:32814"/>
        <dbReference type="EC" id="3.5.2.3"/>
    </reaction>
</comment>
<comment type="cofactor">
    <cofactor evidence="1">
        <name>Zn(2+)</name>
        <dbReference type="ChEBI" id="CHEBI:29105"/>
    </cofactor>
    <text evidence="1">Binds 2 Zn(2+) ions per subunit.</text>
</comment>
<comment type="pathway">
    <text evidence="1">Pyrimidine metabolism; UMP biosynthesis via de novo pathway; (S)-dihydroorotate from bicarbonate: step 3/3.</text>
</comment>
<comment type="subunit">
    <text evidence="1">Homodimer.</text>
</comment>
<comment type="similarity">
    <text evidence="1">Belongs to the metallo-dependent hydrolases superfamily. DHOase family. Class II DHOase subfamily.</text>
</comment>
<comment type="sequence caution" evidence="2">
    <conflict type="erroneous initiation">
        <sequence resource="EMBL-CDS" id="AAO08457"/>
    </conflict>
</comment>
<evidence type="ECO:0000255" key="1">
    <source>
        <dbReference type="HAMAP-Rule" id="MF_00219"/>
    </source>
</evidence>
<evidence type="ECO:0000305" key="2"/>
<feature type="chain" id="PRO_0000147223" description="Dihydroorotase">
    <location>
        <begin position="1"/>
        <end position="342"/>
    </location>
</feature>
<feature type="active site" evidence="1">
    <location>
        <position position="246"/>
    </location>
</feature>
<feature type="binding site" evidence="1">
    <location>
        <position position="13"/>
    </location>
    <ligand>
        <name>Zn(2+)</name>
        <dbReference type="ChEBI" id="CHEBI:29105"/>
        <label>1</label>
    </ligand>
</feature>
<feature type="binding site" evidence="1">
    <location>
        <begin position="15"/>
        <end position="17"/>
    </location>
    <ligand>
        <name>substrate</name>
    </ligand>
</feature>
<feature type="binding site" evidence="1">
    <location>
        <position position="15"/>
    </location>
    <ligand>
        <name>Zn(2+)</name>
        <dbReference type="ChEBI" id="CHEBI:29105"/>
        <label>1</label>
    </ligand>
</feature>
<feature type="binding site" evidence="1">
    <location>
        <position position="41"/>
    </location>
    <ligand>
        <name>substrate</name>
    </ligand>
</feature>
<feature type="binding site" description="via carbamate group" evidence="1">
    <location>
        <position position="98"/>
    </location>
    <ligand>
        <name>Zn(2+)</name>
        <dbReference type="ChEBI" id="CHEBI:29105"/>
        <label>1</label>
    </ligand>
</feature>
<feature type="binding site" description="via carbamate group" evidence="1">
    <location>
        <position position="98"/>
    </location>
    <ligand>
        <name>Zn(2+)</name>
        <dbReference type="ChEBI" id="CHEBI:29105"/>
        <label>2</label>
    </ligand>
</feature>
<feature type="binding site" evidence="1">
    <location>
        <position position="135"/>
    </location>
    <ligand>
        <name>substrate</name>
    </ligand>
</feature>
<feature type="binding site" evidence="1">
    <location>
        <position position="135"/>
    </location>
    <ligand>
        <name>Zn(2+)</name>
        <dbReference type="ChEBI" id="CHEBI:29105"/>
        <label>2</label>
    </ligand>
</feature>
<feature type="binding site" evidence="1">
    <location>
        <position position="173"/>
    </location>
    <ligand>
        <name>Zn(2+)</name>
        <dbReference type="ChEBI" id="CHEBI:29105"/>
        <label>2</label>
    </ligand>
</feature>
<feature type="binding site" evidence="1">
    <location>
        <position position="218"/>
    </location>
    <ligand>
        <name>substrate</name>
    </ligand>
</feature>
<feature type="binding site" evidence="1">
    <location>
        <position position="246"/>
    </location>
    <ligand>
        <name>Zn(2+)</name>
        <dbReference type="ChEBI" id="CHEBI:29105"/>
        <label>1</label>
    </ligand>
</feature>
<feature type="binding site" evidence="1">
    <location>
        <position position="250"/>
    </location>
    <ligand>
        <name>substrate</name>
    </ligand>
</feature>
<feature type="binding site" evidence="1">
    <location>
        <position position="262"/>
    </location>
    <ligand>
        <name>substrate</name>
    </ligand>
</feature>
<feature type="modified residue" description="N6-carboxylysine" evidence="1">
    <location>
        <position position="98"/>
    </location>
</feature>
<reference key="1">
    <citation type="submission" date="2002-12" db="EMBL/GenBank/DDBJ databases">
        <title>Complete genome sequence of Vibrio vulnificus CMCP6.</title>
        <authorList>
            <person name="Rhee J.H."/>
            <person name="Kim S.Y."/>
            <person name="Chung S.S."/>
            <person name="Kim J.J."/>
            <person name="Moon Y.H."/>
            <person name="Jeong H."/>
            <person name="Choy H.E."/>
        </authorList>
    </citation>
    <scope>NUCLEOTIDE SEQUENCE [LARGE SCALE GENOMIC DNA]</scope>
    <source>
        <strain>CMCP6</strain>
    </source>
</reference>
<proteinExistence type="inferred from homology"/>